<protein>
    <recommendedName>
        <fullName evidence="2">Interleukin-34</fullName>
        <shortName evidence="2">IL-34</shortName>
    </recommendedName>
</protein>
<reference evidence="6" key="1">
    <citation type="submission" date="2007-06" db="EMBL/GenBank/DDBJ databases">
        <authorList>
            <consortium name="NIH - Mammalian Gene Collection (MGC) project"/>
        </authorList>
    </citation>
    <scope>NUCLEOTIDE SEQUENCE [LARGE SCALE MRNA]</scope>
    <source>
        <strain evidence="6">Hereford</strain>
        <tissue evidence="6">Brain cortex</tissue>
    </source>
</reference>
<organism>
    <name type="scientific">Bos taurus</name>
    <name type="common">Bovine</name>
    <dbReference type="NCBI Taxonomy" id="9913"/>
    <lineage>
        <taxon>Eukaryota</taxon>
        <taxon>Metazoa</taxon>
        <taxon>Chordata</taxon>
        <taxon>Craniata</taxon>
        <taxon>Vertebrata</taxon>
        <taxon>Euteleostomi</taxon>
        <taxon>Mammalia</taxon>
        <taxon>Eutheria</taxon>
        <taxon>Laurasiatheria</taxon>
        <taxon>Artiodactyla</taxon>
        <taxon>Ruminantia</taxon>
        <taxon>Pecora</taxon>
        <taxon>Bovidae</taxon>
        <taxon>Bovinae</taxon>
        <taxon>Bos</taxon>
    </lineage>
</organism>
<gene>
    <name evidence="6" type="primary">IL34</name>
</gene>
<dbReference type="EMBL" id="BC146187">
    <property type="protein sequence ID" value="AAI46188.1"/>
    <property type="molecule type" value="mRNA"/>
</dbReference>
<dbReference type="RefSeq" id="NP_001093794.1">
    <property type="nucleotide sequence ID" value="NM_001100324.2"/>
</dbReference>
<dbReference type="RefSeq" id="XP_005218384.1">
    <property type="nucleotide sequence ID" value="XM_005218327.5"/>
</dbReference>
<dbReference type="RefSeq" id="XP_005218387.1">
    <property type="nucleotide sequence ID" value="XM_005218330.5"/>
</dbReference>
<dbReference type="RefSeq" id="XP_005218388.1">
    <property type="nucleotide sequence ID" value="XM_005218331.5"/>
</dbReference>
<dbReference type="RefSeq" id="XP_010812596.1">
    <property type="nucleotide sequence ID" value="XM_010814294.4"/>
</dbReference>
<dbReference type="RefSeq" id="XP_010812597.1">
    <property type="nucleotide sequence ID" value="XM_010814295.4"/>
</dbReference>
<dbReference type="RefSeq" id="XP_010812598.1">
    <property type="nucleotide sequence ID" value="XM_010814296.4"/>
</dbReference>
<dbReference type="RefSeq" id="XP_010812599.1">
    <property type="nucleotide sequence ID" value="XM_010814297.4"/>
</dbReference>
<dbReference type="SMR" id="A6QL48"/>
<dbReference type="FunCoup" id="A6QL48">
    <property type="interactions" value="152"/>
</dbReference>
<dbReference type="STRING" id="9913.ENSBTAP00000059045"/>
<dbReference type="GlyCosmos" id="A6QL48">
    <property type="glycosylation" value="1 site, No reported glycans"/>
</dbReference>
<dbReference type="GlyGen" id="A6QL48">
    <property type="glycosylation" value="1 site"/>
</dbReference>
<dbReference type="PaxDb" id="9913-ENSBTAP00000046513"/>
<dbReference type="Ensembl" id="ENSBTAT00000049652.3">
    <property type="protein sequence ID" value="ENSBTAP00000046513.2"/>
    <property type="gene ID" value="ENSBTAG00000009357.6"/>
</dbReference>
<dbReference type="GeneID" id="508292"/>
<dbReference type="KEGG" id="bta:508292"/>
<dbReference type="CTD" id="146433"/>
<dbReference type="VEuPathDB" id="HostDB:ENSBTAG00000009357"/>
<dbReference type="VGNC" id="VGNC:30156">
    <property type="gene designation" value="IL34"/>
</dbReference>
<dbReference type="eggNOG" id="ENOG502S2ET">
    <property type="taxonomic scope" value="Eukaryota"/>
</dbReference>
<dbReference type="GeneTree" id="ENSGT00390000000932"/>
<dbReference type="HOGENOM" id="CLU_102223_1_0_1"/>
<dbReference type="InParanoid" id="A6QL48"/>
<dbReference type="OMA" id="WQDCELP"/>
<dbReference type="OrthoDB" id="9902423at2759"/>
<dbReference type="TreeFam" id="TF337386"/>
<dbReference type="Reactome" id="R-BTA-449836">
    <property type="pathway name" value="Other interleukin signaling"/>
</dbReference>
<dbReference type="Proteomes" id="UP000009136">
    <property type="component" value="Chromosome 18"/>
</dbReference>
<dbReference type="Bgee" id="ENSBTAG00000009357">
    <property type="expression patterns" value="Expressed in pons and 96 other cell types or tissues"/>
</dbReference>
<dbReference type="GO" id="GO:0005615">
    <property type="term" value="C:extracellular space"/>
    <property type="evidence" value="ECO:0000250"/>
    <property type="project" value="UniProtKB"/>
</dbReference>
<dbReference type="GO" id="GO:0005125">
    <property type="term" value="F:cytokine activity"/>
    <property type="evidence" value="ECO:0007669"/>
    <property type="project" value="UniProtKB-KW"/>
</dbReference>
<dbReference type="GO" id="GO:0008083">
    <property type="term" value="F:growth factor activity"/>
    <property type="evidence" value="ECO:0007669"/>
    <property type="project" value="UniProtKB-KW"/>
</dbReference>
<dbReference type="GO" id="GO:0005157">
    <property type="term" value="F:macrophage colony-stimulating factor receptor binding"/>
    <property type="evidence" value="ECO:0000250"/>
    <property type="project" value="UniProtKB"/>
</dbReference>
<dbReference type="GO" id="GO:0006954">
    <property type="term" value="P:inflammatory response"/>
    <property type="evidence" value="ECO:0007669"/>
    <property type="project" value="UniProtKB-KW"/>
</dbReference>
<dbReference type="GO" id="GO:0045087">
    <property type="term" value="P:innate immune response"/>
    <property type="evidence" value="ECO:0007669"/>
    <property type="project" value="UniProtKB-KW"/>
</dbReference>
<dbReference type="GO" id="GO:0008284">
    <property type="term" value="P:positive regulation of cell population proliferation"/>
    <property type="evidence" value="ECO:0000250"/>
    <property type="project" value="UniProtKB"/>
</dbReference>
<dbReference type="GO" id="GO:0045651">
    <property type="term" value="P:positive regulation of macrophage differentiation"/>
    <property type="evidence" value="ECO:0000318"/>
    <property type="project" value="GO_Central"/>
</dbReference>
<dbReference type="GO" id="GO:0045657">
    <property type="term" value="P:positive regulation of monocyte differentiation"/>
    <property type="evidence" value="ECO:0000318"/>
    <property type="project" value="GO_Central"/>
</dbReference>
<dbReference type="GO" id="GO:0048714">
    <property type="term" value="P:positive regulation of oligodendrocyte differentiation"/>
    <property type="evidence" value="ECO:0000250"/>
    <property type="project" value="UniProtKB"/>
</dbReference>
<dbReference type="GO" id="GO:0001934">
    <property type="term" value="P:positive regulation of protein phosphorylation"/>
    <property type="evidence" value="ECO:0000250"/>
    <property type="project" value="UniProtKB"/>
</dbReference>
<dbReference type="FunFam" id="1.20.1250.80:FF:000001">
    <property type="entry name" value="Interleukin-34"/>
    <property type="match status" value="1"/>
</dbReference>
<dbReference type="Gene3D" id="1.20.1250.80">
    <property type="entry name" value="Interleukin-34"/>
    <property type="match status" value="1"/>
</dbReference>
<dbReference type="InterPro" id="IPR020415">
    <property type="entry name" value="IL-34"/>
</dbReference>
<dbReference type="InterPro" id="IPR038328">
    <property type="entry name" value="IL-34_sf"/>
</dbReference>
<dbReference type="PANTHER" id="PTHR28606">
    <property type="entry name" value="INTERLEUKIN-34"/>
    <property type="match status" value="1"/>
</dbReference>
<dbReference type="PANTHER" id="PTHR28606:SF1">
    <property type="entry name" value="INTERLEUKIN-34"/>
    <property type="match status" value="1"/>
</dbReference>
<dbReference type="Pfam" id="PF15036">
    <property type="entry name" value="IL34"/>
    <property type="match status" value="1"/>
</dbReference>
<dbReference type="PRINTS" id="PR01938">
    <property type="entry name" value="INTRLEUKIN34"/>
</dbReference>
<proteinExistence type="evidence at transcript level"/>
<keyword id="KW-0202">Cytokine</keyword>
<keyword id="KW-0325">Glycoprotein</keyword>
<keyword id="KW-0339">Growth factor</keyword>
<keyword id="KW-0391">Immunity</keyword>
<keyword id="KW-0395">Inflammatory response</keyword>
<keyword id="KW-0399">Innate immunity</keyword>
<keyword id="KW-1185">Reference proteome</keyword>
<keyword id="KW-0964">Secreted</keyword>
<keyword id="KW-0732">Signal</keyword>
<evidence type="ECO:0000250" key="1"/>
<evidence type="ECO:0000250" key="2">
    <source>
        <dbReference type="UniProtKB" id="Q6ZMJ4"/>
    </source>
</evidence>
<evidence type="ECO:0000255" key="3"/>
<evidence type="ECO:0000256" key="4">
    <source>
        <dbReference type="SAM" id="MobiDB-lite"/>
    </source>
</evidence>
<evidence type="ECO:0000305" key="5"/>
<evidence type="ECO:0000312" key="6">
    <source>
        <dbReference type="EMBL" id="AAI46188.1"/>
    </source>
</evidence>
<accession>A6QL48</accession>
<sequence length="234" mass="26294">MPQGLAWLRYLGILLGMALGNEGLEPWPLTRSDECAITGFLRDKLQYRNRLQYMKHYFPINYRVSVPYEGVLRTANVTRLQRAQVSQQELRYLWVLVSLSATEWVQEVLLEGHPSWKYLEEVHTLLLDVKQGLGGVEVSPQVEAVLNLLSAPGSLKLVRPKALLDNCFRVMQLLYCPCCKESSVLNWQDCEAPQPQPRSPASAQCEAAQLYPLPQPPSTSLPRVLGPSAGPPTQ</sequence>
<name>IL34_BOVIN</name>
<comment type="function">
    <text evidence="1">Cytokine that promotes the proliferation, survival and differentiation of monocytes and macrophages. Promotes the release of pro-inflammatory chemokines, and thereby plays an important role in innate immunity and in inflammatory processes. Plays an important role in the regulation of osteoclast proliferation and differentiation, and in the regulation of bone resorption. Signaling via CSF1R and its downstream effectors stimulates phosphorylation of MAPK1/ERK2 AND MAPK3/ERK1 (By similarity).</text>
</comment>
<comment type="subunit">
    <text evidence="1">Homodimer. Interacts with CSF1R (By similarity).</text>
</comment>
<comment type="subcellular location">
    <subcellularLocation>
        <location evidence="2">Secreted</location>
    </subcellularLocation>
</comment>
<comment type="similarity">
    <text evidence="5">Belongs to the IL-34 family.</text>
</comment>
<feature type="signal peptide" evidence="3">
    <location>
        <begin position="1"/>
        <end position="20"/>
    </location>
</feature>
<feature type="chain" id="PRO_0000347276" description="Interleukin-34" evidence="3">
    <location>
        <begin position="21"/>
        <end position="234"/>
    </location>
</feature>
<feature type="region of interest" description="Disordered" evidence="4">
    <location>
        <begin position="191"/>
        <end position="234"/>
    </location>
</feature>
<feature type="glycosylation site" description="N-linked (GlcNAc...) asparagine" evidence="3">
    <location>
        <position position="76"/>
    </location>
</feature>